<keyword id="KW-0067">ATP-binding</keyword>
<keyword id="KW-0169">Cobalamin biosynthesis</keyword>
<keyword id="KW-0315">Glutamine amidotransferase</keyword>
<keyword id="KW-0436">Ligase</keyword>
<keyword id="KW-0460">Magnesium</keyword>
<keyword id="KW-0484">Methanogenesis</keyword>
<keyword id="KW-0547">Nucleotide-binding</keyword>
<protein>
    <recommendedName>
        <fullName evidence="1">Cobyrinate a,c-diamide synthase</fullName>
        <ecNumber evidence="1">6.3.5.11</ecNumber>
    </recommendedName>
    <alternativeName>
        <fullName evidence="1">Cobyrinic acid a,c-diamide synthetase</fullName>
    </alternativeName>
    <alternativeName>
        <fullName evidence="1">Ni-sirohydrochlorin a,c-diamide synthase</fullName>
        <ecNumber evidence="1">6.3.5.12</ecNumber>
    </alternativeName>
    <alternativeName>
        <fullName evidence="1">Ni-sirohydrochlorin a,c-diamide synthetase</fullName>
    </alternativeName>
</protein>
<organism>
    <name type="scientific">Methanococcus maripaludis (strain C7 / ATCC BAA-1331)</name>
    <dbReference type="NCBI Taxonomy" id="426368"/>
    <lineage>
        <taxon>Archaea</taxon>
        <taxon>Methanobacteriati</taxon>
        <taxon>Methanobacteriota</taxon>
        <taxon>Methanomada group</taxon>
        <taxon>Methanococci</taxon>
        <taxon>Methanococcales</taxon>
        <taxon>Methanococcaceae</taxon>
        <taxon>Methanococcus</taxon>
    </lineage>
</organism>
<feature type="chain" id="PRO_1000074391" description="Cobyrinate a,c-diamide synthase">
    <location>
        <begin position="1"/>
        <end position="447"/>
    </location>
</feature>
<feature type="domain" description="GATase cobBQ-type" evidence="1">
    <location>
        <begin position="252"/>
        <end position="439"/>
    </location>
</feature>
<feature type="active site" description="Nucleophile" evidence="1">
    <location>
        <position position="331"/>
    </location>
</feature>
<feature type="site" description="Increases nucleophilicity of active site Cys" evidence="1">
    <location>
        <position position="431"/>
    </location>
</feature>
<evidence type="ECO:0000255" key="1">
    <source>
        <dbReference type="HAMAP-Rule" id="MF_00027"/>
    </source>
</evidence>
<reference key="1">
    <citation type="submission" date="2007-06" db="EMBL/GenBank/DDBJ databases">
        <title>Complete sequence of Methanococcus maripaludis C7.</title>
        <authorList>
            <consortium name="US DOE Joint Genome Institute"/>
            <person name="Copeland A."/>
            <person name="Lucas S."/>
            <person name="Lapidus A."/>
            <person name="Barry K."/>
            <person name="Glavina del Rio T."/>
            <person name="Dalin E."/>
            <person name="Tice H."/>
            <person name="Pitluck S."/>
            <person name="Clum A."/>
            <person name="Schmutz J."/>
            <person name="Larimer F."/>
            <person name="Land M."/>
            <person name="Hauser L."/>
            <person name="Kyrpides N."/>
            <person name="Anderson I."/>
            <person name="Sieprawska-Lupa M."/>
            <person name="Whitman W.B."/>
            <person name="Richardson P."/>
        </authorList>
    </citation>
    <scope>NUCLEOTIDE SEQUENCE [LARGE SCALE GENOMIC DNA]</scope>
    <source>
        <strain>C7 / ATCC BAA-1331</strain>
    </source>
</reference>
<proteinExistence type="inferred from homology"/>
<gene>
    <name evidence="1" type="primary">cbiA</name>
    <name evidence="1" type="synonym">cfbB</name>
    <name type="ordered locus">MmarC7_0722</name>
</gene>
<accession>A6VH63</accession>
<sequence length="447" mass="50015">MKRIVIAGTSSMVGKTTISTGIMKALSKKNNVQPYKIGPDYIDPTYHTEATENKSRNLDSFFMDKLQIRSLFKKHSKNKDISVIEGVRGLYEGISPYNDIGSTASVAKTLNAPVILLMDARSLTRSAAAIIKGFKSFDTELNIKGVIFNKIRGEGHLNKLKEAVKYYDNEIEIIGAIPRDEGLSVSQRHLGLVPTPENKQGLLERIDLWGNTVEECLDIEKIVELSDKSFDFCVDEKNKDETLWKVEKNNSKIAVAFDESFNFYYWDNFDAMEENGAKLKFFSPLNDSEVPDCDTIYLGGGYPEIFSEKLSENKSMIDSIRNFDGKIYGECGGLMYLTNSIDGKEMLKLIDANAVMTPNVQGLSYVKGTFEKDCIIGEKSKEFKAHEFHYSKLININENDFSYRINRGKGIINSMDGITSKGGDIVGGYAHQHCIGNPYFAASLSKI</sequence>
<dbReference type="EC" id="6.3.5.11" evidence="1"/>
<dbReference type="EC" id="6.3.5.12" evidence="1"/>
<dbReference type="EMBL" id="CP000745">
    <property type="protein sequence ID" value="ABR65789.1"/>
    <property type="molecule type" value="Genomic_DNA"/>
</dbReference>
<dbReference type="SMR" id="A6VH63"/>
<dbReference type="STRING" id="426368.MmarC7_0722"/>
<dbReference type="KEGG" id="mmz:MmarC7_0722"/>
<dbReference type="eggNOG" id="arCOG00106">
    <property type="taxonomic scope" value="Archaea"/>
</dbReference>
<dbReference type="HOGENOM" id="CLU_022752_2_0_2"/>
<dbReference type="OrthoDB" id="8896at2157"/>
<dbReference type="UniPathway" id="UPA00148">
    <property type="reaction ID" value="UER00231"/>
</dbReference>
<dbReference type="GO" id="GO:0005524">
    <property type="term" value="F:ATP binding"/>
    <property type="evidence" value="ECO:0007669"/>
    <property type="project" value="UniProtKB-UniRule"/>
</dbReference>
<dbReference type="GO" id="GO:0042242">
    <property type="term" value="F:cobyrinic acid a,c-diamide synthase activity"/>
    <property type="evidence" value="ECO:0007669"/>
    <property type="project" value="UniProtKB-UniRule"/>
</dbReference>
<dbReference type="GO" id="GO:0009236">
    <property type="term" value="P:cobalamin biosynthetic process"/>
    <property type="evidence" value="ECO:0007669"/>
    <property type="project" value="UniProtKB-UniRule"/>
</dbReference>
<dbReference type="GO" id="GO:0015948">
    <property type="term" value="P:methanogenesis"/>
    <property type="evidence" value="ECO:0007669"/>
    <property type="project" value="UniProtKB-KW"/>
</dbReference>
<dbReference type="CDD" id="cd05388">
    <property type="entry name" value="CobB_N"/>
    <property type="match status" value="1"/>
</dbReference>
<dbReference type="CDD" id="cd03130">
    <property type="entry name" value="GATase1_CobB"/>
    <property type="match status" value="1"/>
</dbReference>
<dbReference type="Gene3D" id="3.40.50.880">
    <property type="match status" value="1"/>
</dbReference>
<dbReference type="Gene3D" id="3.40.50.300">
    <property type="entry name" value="P-loop containing nucleotide triphosphate hydrolases"/>
    <property type="match status" value="1"/>
</dbReference>
<dbReference type="HAMAP" id="MF_00027">
    <property type="entry name" value="CobB_CbiA"/>
    <property type="match status" value="1"/>
</dbReference>
<dbReference type="InterPro" id="IPR004484">
    <property type="entry name" value="CbiA/CobB_synth"/>
</dbReference>
<dbReference type="InterPro" id="IPR029062">
    <property type="entry name" value="Class_I_gatase-like"/>
</dbReference>
<dbReference type="InterPro" id="IPR002586">
    <property type="entry name" value="CobQ/CobB/MinD/ParA_Nub-bd_dom"/>
</dbReference>
<dbReference type="InterPro" id="IPR011698">
    <property type="entry name" value="GATase_3"/>
</dbReference>
<dbReference type="InterPro" id="IPR027417">
    <property type="entry name" value="P-loop_NTPase"/>
</dbReference>
<dbReference type="NCBIfam" id="TIGR00379">
    <property type="entry name" value="cobB"/>
    <property type="match status" value="1"/>
</dbReference>
<dbReference type="NCBIfam" id="NF033195">
    <property type="entry name" value="F430_CfbB"/>
    <property type="match status" value="1"/>
</dbReference>
<dbReference type="NCBIfam" id="NF002204">
    <property type="entry name" value="PRK01077.1"/>
    <property type="match status" value="1"/>
</dbReference>
<dbReference type="PANTHER" id="PTHR43873">
    <property type="entry name" value="COBYRINATE A,C-DIAMIDE SYNTHASE"/>
    <property type="match status" value="1"/>
</dbReference>
<dbReference type="PANTHER" id="PTHR43873:SF1">
    <property type="entry name" value="COBYRINATE A,C-DIAMIDE SYNTHASE"/>
    <property type="match status" value="1"/>
</dbReference>
<dbReference type="Pfam" id="PF01656">
    <property type="entry name" value="CbiA"/>
    <property type="match status" value="1"/>
</dbReference>
<dbReference type="Pfam" id="PF07685">
    <property type="entry name" value="GATase_3"/>
    <property type="match status" value="1"/>
</dbReference>
<dbReference type="SUPFAM" id="SSF52317">
    <property type="entry name" value="Class I glutamine amidotransferase-like"/>
    <property type="match status" value="1"/>
</dbReference>
<dbReference type="SUPFAM" id="SSF52540">
    <property type="entry name" value="P-loop containing nucleoside triphosphate hydrolases"/>
    <property type="match status" value="1"/>
</dbReference>
<dbReference type="PROSITE" id="PS51274">
    <property type="entry name" value="GATASE_COBBQ"/>
    <property type="match status" value="1"/>
</dbReference>
<comment type="function">
    <text evidence="1">Catalyzes the ATP-dependent amidation of the two carboxylate groups at positions a and c of cobyrinate, using either L-glutamine or ammonia as the nitrogen source. Involved in the biosynthesis of the unique nickel-containing tetrapyrrole coenzyme F430, the prosthetic group of methyl-coenzyme M reductase (MCR), which plays a key role in methanogenesis and anaerobic methane oxidation. Catalyzes the ATP-dependent amidation of the two carboxylate groups at positions a and c of Ni-sirohydrochlorin, using L-glutamine or ammonia as the nitrogen source.</text>
</comment>
<comment type="catalytic activity">
    <reaction evidence="1">
        <text>cob(II)yrinate + 2 L-glutamine + 2 ATP + 2 H2O = cob(II)yrinate a,c diamide + 2 L-glutamate + 2 ADP + 2 phosphate + 2 H(+)</text>
        <dbReference type="Rhea" id="RHEA:26289"/>
        <dbReference type="ChEBI" id="CHEBI:15377"/>
        <dbReference type="ChEBI" id="CHEBI:15378"/>
        <dbReference type="ChEBI" id="CHEBI:29985"/>
        <dbReference type="ChEBI" id="CHEBI:30616"/>
        <dbReference type="ChEBI" id="CHEBI:43474"/>
        <dbReference type="ChEBI" id="CHEBI:58359"/>
        <dbReference type="ChEBI" id="CHEBI:58537"/>
        <dbReference type="ChEBI" id="CHEBI:58894"/>
        <dbReference type="ChEBI" id="CHEBI:456216"/>
        <dbReference type="EC" id="6.3.5.11"/>
    </reaction>
</comment>
<comment type="catalytic activity">
    <reaction evidence="1">
        <text>Ni-sirohydrochlorin + 2 L-glutamine + 2 ATP + 2 H2O = Ni-sirohydrochlorin a,c-diamide + 2 L-glutamate + 2 ADP + 2 phosphate + 2 H(+)</text>
        <dbReference type="Rhea" id="RHEA:52896"/>
        <dbReference type="ChEBI" id="CHEBI:15377"/>
        <dbReference type="ChEBI" id="CHEBI:15378"/>
        <dbReference type="ChEBI" id="CHEBI:29985"/>
        <dbReference type="ChEBI" id="CHEBI:30616"/>
        <dbReference type="ChEBI" id="CHEBI:43474"/>
        <dbReference type="ChEBI" id="CHEBI:58359"/>
        <dbReference type="ChEBI" id="CHEBI:136841"/>
        <dbReference type="ChEBI" id="CHEBI:136887"/>
        <dbReference type="ChEBI" id="CHEBI:456216"/>
        <dbReference type="EC" id="6.3.5.12"/>
    </reaction>
</comment>
<comment type="cofactor">
    <cofactor evidence="1">
        <name>Mg(2+)</name>
        <dbReference type="ChEBI" id="CHEBI:18420"/>
    </cofactor>
</comment>
<comment type="pathway">
    <text evidence="1">Cofactor biosynthesis; adenosylcobalamin biosynthesis; cob(II)yrinate a,c-diamide from sirohydrochlorin (anaerobic route): step 10/10.</text>
</comment>
<comment type="domain">
    <text evidence="1">Comprises of two domains. The C-terminal domain contains the binding site for glutamine and catalyzes the hydrolysis of this substrate to glutamate and ammonia. The N-terminal domain is anticipated to bind ATP, and cobyrinate or Ni-sirohydrochlorin, and catalyzes the ultimate synthesis of the diamide product. The ammonia produced via the glutaminase domain is probably translocated to the adjacent domain via a molecular tunnel, where it reacts with an activated intermediate.</text>
</comment>
<comment type="miscellaneous">
    <text evidence="1">The a and c carboxylates of cobyrinate and Ni-sirohydrochlorin are activated for nucleophilic attack via formation of a phosphorylated intermediate by ATP. CbiA catalyzes first the amidation of the c-carboxylate, and then that of the a-carboxylate.</text>
</comment>
<comment type="similarity">
    <text evidence="1">Belongs to the CobB/CbiA family.</text>
</comment>
<name>CBIA_METM7</name>